<comment type="catalytic activity">
    <reaction evidence="1">
        <text>L-histidinol phosphate + 2-oxoglutarate = 3-(imidazol-4-yl)-2-oxopropyl phosphate + L-glutamate</text>
        <dbReference type="Rhea" id="RHEA:23744"/>
        <dbReference type="ChEBI" id="CHEBI:16810"/>
        <dbReference type="ChEBI" id="CHEBI:29985"/>
        <dbReference type="ChEBI" id="CHEBI:57766"/>
        <dbReference type="ChEBI" id="CHEBI:57980"/>
        <dbReference type="EC" id="2.6.1.9"/>
    </reaction>
</comment>
<comment type="cofactor">
    <cofactor evidence="1">
        <name>pyridoxal 5'-phosphate</name>
        <dbReference type="ChEBI" id="CHEBI:597326"/>
    </cofactor>
</comment>
<comment type="pathway">
    <text evidence="1">Amino-acid biosynthesis; L-histidine biosynthesis; L-histidine from 5-phospho-alpha-D-ribose 1-diphosphate: step 7/9.</text>
</comment>
<comment type="subunit">
    <text evidence="1">Homodimer.</text>
</comment>
<comment type="similarity">
    <text evidence="1">Belongs to the class-II pyridoxal-phosphate-dependent aminotransferase family. Histidinol-phosphate aminotransferase subfamily.</text>
</comment>
<sequence length="368" mass="39049">MTKAIIPQPRPGIMEISPYVGGESKLAGVDRIIKLSSNEGALGASPRVRDALIASAGEAHRYPDGNATALREALGRTHGLDPARIVCGAGSDELIGLLCRAYAGPGDSIVQSAYGFLMYGIYARGVGAEPILAPESDLTADIDAMLAAVRDTTKLVFLANPNNPTGTCLPTSEVVRLREGLRDDIILVVDAAYAEYVERNDYDAGARLVDSHPNTVMLRTFSKIGLGGLRLGWSYGPAHIIDVLNRVRGPFNICGQALVAGEAALADPAFTDLSRAHNSLWREWTRAKLQAMGIRVGESSGNFVLATFDAEGPFTALAADAALRQQGIICRRVAGYGLPNCLRITIGRDDEMQAVVEALGAFMAGEGR</sequence>
<proteinExistence type="inferred from homology"/>
<name>HIS8_RHORT</name>
<accession>Q2RP86</accession>
<evidence type="ECO:0000255" key="1">
    <source>
        <dbReference type="HAMAP-Rule" id="MF_01023"/>
    </source>
</evidence>
<feature type="chain" id="PRO_0000230223" description="Histidinol-phosphate aminotransferase">
    <location>
        <begin position="1"/>
        <end position="368"/>
    </location>
</feature>
<feature type="modified residue" description="N6-(pyridoxal phosphate)lysine" evidence="1">
    <location>
        <position position="223"/>
    </location>
</feature>
<dbReference type="EC" id="2.6.1.9" evidence="1"/>
<dbReference type="EMBL" id="CP000230">
    <property type="protein sequence ID" value="ABC24059.1"/>
    <property type="molecule type" value="Genomic_DNA"/>
</dbReference>
<dbReference type="RefSeq" id="WP_011391012.1">
    <property type="nucleotide sequence ID" value="NC_007643.1"/>
</dbReference>
<dbReference type="RefSeq" id="YP_428346.1">
    <property type="nucleotide sequence ID" value="NC_007643.1"/>
</dbReference>
<dbReference type="SMR" id="Q2RP86"/>
<dbReference type="STRING" id="269796.Rru_A3264"/>
<dbReference type="EnsemblBacteria" id="ABC24059">
    <property type="protein sequence ID" value="ABC24059"/>
    <property type="gene ID" value="Rru_A3264"/>
</dbReference>
<dbReference type="KEGG" id="rru:Rru_A3264"/>
<dbReference type="PATRIC" id="fig|269796.9.peg.3380"/>
<dbReference type="eggNOG" id="COG0079">
    <property type="taxonomic scope" value="Bacteria"/>
</dbReference>
<dbReference type="HOGENOM" id="CLU_017584_3_3_5"/>
<dbReference type="PhylomeDB" id="Q2RP86"/>
<dbReference type="UniPathway" id="UPA00031">
    <property type="reaction ID" value="UER00012"/>
</dbReference>
<dbReference type="Proteomes" id="UP000001929">
    <property type="component" value="Chromosome"/>
</dbReference>
<dbReference type="GO" id="GO:0004400">
    <property type="term" value="F:histidinol-phosphate transaminase activity"/>
    <property type="evidence" value="ECO:0007669"/>
    <property type="project" value="UniProtKB-UniRule"/>
</dbReference>
<dbReference type="GO" id="GO:0030170">
    <property type="term" value="F:pyridoxal phosphate binding"/>
    <property type="evidence" value="ECO:0007669"/>
    <property type="project" value="InterPro"/>
</dbReference>
<dbReference type="GO" id="GO:0000105">
    <property type="term" value="P:L-histidine biosynthetic process"/>
    <property type="evidence" value="ECO:0007669"/>
    <property type="project" value="UniProtKB-UniRule"/>
</dbReference>
<dbReference type="CDD" id="cd00609">
    <property type="entry name" value="AAT_like"/>
    <property type="match status" value="1"/>
</dbReference>
<dbReference type="Gene3D" id="3.90.1150.10">
    <property type="entry name" value="Aspartate Aminotransferase, domain 1"/>
    <property type="match status" value="1"/>
</dbReference>
<dbReference type="Gene3D" id="3.40.640.10">
    <property type="entry name" value="Type I PLP-dependent aspartate aminotransferase-like (Major domain)"/>
    <property type="match status" value="1"/>
</dbReference>
<dbReference type="HAMAP" id="MF_01023">
    <property type="entry name" value="HisC_aminotrans_2"/>
    <property type="match status" value="1"/>
</dbReference>
<dbReference type="InterPro" id="IPR004839">
    <property type="entry name" value="Aminotransferase_I/II_large"/>
</dbReference>
<dbReference type="InterPro" id="IPR005861">
    <property type="entry name" value="HisP_aminotrans"/>
</dbReference>
<dbReference type="InterPro" id="IPR050106">
    <property type="entry name" value="HistidinolP_aminotransfase"/>
</dbReference>
<dbReference type="InterPro" id="IPR015424">
    <property type="entry name" value="PyrdxlP-dep_Trfase"/>
</dbReference>
<dbReference type="InterPro" id="IPR015421">
    <property type="entry name" value="PyrdxlP-dep_Trfase_major"/>
</dbReference>
<dbReference type="InterPro" id="IPR015422">
    <property type="entry name" value="PyrdxlP-dep_Trfase_small"/>
</dbReference>
<dbReference type="NCBIfam" id="TIGR01141">
    <property type="entry name" value="hisC"/>
    <property type="match status" value="1"/>
</dbReference>
<dbReference type="PANTHER" id="PTHR43643:SF3">
    <property type="entry name" value="HISTIDINOL-PHOSPHATE AMINOTRANSFERASE"/>
    <property type="match status" value="1"/>
</dbReference>
<dbReference type="PANTHER" id="PTHR43643">
    <property type="entry name" value="HISTIDINOL-PHOSPHATE AMINOTRANSFERASE 2"/>
    <property type="match status" value="1"/>
</dbReference>
<dbReference type="Pfam" id="PF00155">
    <property type="entry name" value="Aminotran_1_2"/>
    <property type="match status" value="1"/>
</dbReference>
<dbReference type="SUPFAM" id="SSF53383">
    <property type="entry name" value="PLP-dependent transferases"/>
    <property type="match status" value="1"/>
</dbReference>
<organism>
    <name type="scientific">Rhodospirillum rubrum (strain ATCC 11170 / ATH 1.1.1 / DSM 467 / LMG 4362 / NCIMB 8255 / S1)</name>
    <dbReference type="NCBI Taxonomy" id="269796"/>
    <lineage>
        <taxon>Bacteria</taxon>
        <taxon>Pseudomonadati</taxon>
        <taxon>Pseudomonadota</taxon>
        <taxon>Alphaproteobacteria</taxon>
        <taxon>Rhodospirillales</taxon>
        <taxon>Rhodospirillaceae</taxon>
        <taxon>Rhodospirillum</taxon>
    </lineage>
</organism>
<gene>
    <name evidence="1" type="primary">hisC</name>
    <name type="ordered locus">Rru_A3264</name>
</gene>
<keyword id="KW-0028">Amino-acid biosynthesis</keyword>
<keyword id="KW-0032">Aminotransferase</keyword>
<keyword id="KW-0368">Histidine biosynthesis</keyword>
<keyword id="KW-0663">Pyridoxal phosphate</keyword>
<keyword id="KW-1185">Reference proteome</keyword>
<keyword id="KW-0808">Transferase</keyword>
<reference key="1">
    <citation type="journal article" date="2011" name="Stand. Genomic Sci.">
        <title>Complete genome sequence of Rhodospirillum rubrum type strain (S1).</title>
        <authorList>
            <person name="Munk A.C."/>
            <person name="Copeland A."/>
            <person name="Lucas S."/>
            <person name="Lapidus A."/>
            <person name="Del Rio T.G."/>
            <person name="Barry K."/>
            <person name="Detter J.C."/>
            <person name="Hammon N."/>
            <person name="Israni S."/>
            <person name="Pitluck S."/>
            <person name="Brettin T."/>
            <person name="Bruce D."/>
            <person name="Han C."/>
            <person name="Tapia R."/>
            <person name="Gilna P."/>
            <person name="Schmutz J."/>
            <person name="Larimer F."/>
            <person name="Land M."/>
            <person name="Kyrpides N.C."/>
            <person name="Mavromatis K."/>
            <person name="Richardson P."/>
            <person name="Rohde M."/>
            <person name="Goeker M."/>
            <person name="Klenk H.P."/>
            <person name="Zhang Y."/>
            <person name="Roberts G.P."/>
            <person name="Reslewic S."/>
            <person name="Schwartz D.C."/>
        </authorList>
    </citation>
    <scope>NUCLEOTIDE SEQUENCE [LARGE SCALE GENOMIC DNA]</scope>
    <source>
        <strain>ATCC 11170 / ATH 1.1.1 / DSM 467 / LMG 4362 / NCIMB 8255 / S1</strain>
    </source>
</reference>
<protein>
    <recommendedName>
        <fullName evidence="1">Histidinol-phosphate aminotransferase</fullName>
        <ecNumber evidence="1">2.6.1.9</ecNumber>
    </recommendedName>
    <alternativeName>
        <fullName evidence="1">Imidazole acetol-phosphate transaminase</fullName>
    </alternativeName>
</protein>